<proteinExistence type="inferred from homology"/>
<dbReference type="EC" id="7.1.1.-" evidence="1"/>
<dbReference type="EMBL" id="AJ012180">
    <property type="protein sequence ID" value="CAB45639.1"/>
    <property type="molecule type" value="Genomic_DNA"/>
</dbReference>
<dbReference type="EMBL" id="BA000019">
    <property type="protein sequence ID" value="BAB75541.1"/>
    <property type="molecule type" value="Genomic_DNA"/>
</dbReference>
<dbReference type="EMBL" id="U31208">
    <property type="protein sequence ID" value="AAC44352.1"/>
    <property type="molecule type" value="Genomic_DNA"/>
</dbReference>
<dbReference type="PIR" id="AC2286">
    <property type="entry name" value="AC2286"/>
</dbReference>
<dbReference type="PIR" id="S74215">
    <property type="entry name" value="S74215"/>
</dbReference>
<dbReference type="RefSeq" id="WP_010997983.1">
    <property type="nucleotide sequence ID" value="NZ_RSCN01000011.1"/>
</dbReference>
<dbReference type="SMR" id="P0A3S5"/>
<dbReference type="STRING" id="103690.gene:10495884"/>
<dbReference type="GeneID" id="58724530"/>
<dbReference type="KEGG" id="ana:all3842"/>
<dbReference type="eggNOG" id="COG0838">
    <property type="taxonomic scope" value="Bacteria"/>
</dbReference>
<dbReference type="OrthoDB" id="9791970at2"/>
<dbReference type="Proteomes" id="UP000002483">
    <property type="component" value="Chromosome"/>
</dbReference>
<dbReference type="GO" id="GO:0030964">
    <property type="term" value="C:NADH dehydrogenase complex"/>
    <property type="evidence" value="ECO:0007669"/>
    <property type="project" value="TreeGrafter"/>
</dbReference>
<dbReference type="GO" id="GO:0031676">
    <property type="term" value="C:plasma membrane-derived thylakoid membrane"/>
    <property type="evidence" value="ECO:0007669"/>
    <property type="project" value="UniProtKB-SubCell"/>
</dbReference>
<dbReference type="GO" id="GO:0008137">
    <property type="term" value="F:NADH dehydrogenase (ubiquinone) activity"/>
    <property type="evidence" value="ECO:0007669"/>
    <property type="project" value="InterPro"/>
</dbReference>
<dbReference type="GO" id="GO:0048038">
    <property type="term" value="F:quinone binding"/>
    <property type="evidence" value="ECO:0007669"/>
    <property type="project" value="UniProtKB-KW"/>
</dbReference>
<dbReference type="GO" id="GO:0019684">
    <property type="term" value="P:photosynthesis, light reaction"/>
    <property type="evidence" value="ECO:0007669"/>
    <property type="project" value="UniProtKB-UniRule"/>
</dbReference>
<dbReference type="FunFam" id="1.20.58.1610:FF:000001">
    <property type="entry name" value="NAD(P)H-quinone oxidoreductase subunit 3, chloroplastic"/>
    <property type="match status" value="1"/>
</dbReference>
<dbReference type="Gene3D" id="1.20.58.1610">
    <property type="entry name" value="NADH:ubiquinone/plastoquinone oxidoreductase, chain 3"/>
    <property type="match status" value="1"/>
</dbReference>
<dbReference type="HAMAP" id="MF_01394">
    <property type="entry name" value="NDH1_NuoA"/>
    <property type="match status" value="1"/>
</dbReference>
<dbReference type="InterPro" id="IPR023043">
    <property type="entry name" value="NAD(P)H_OxRDtase_bac/plastid"/>
</dbReference>
<dbReference type="InterPro" id="IPR000440">
    <property type="entry name" value="NADH_UbQ/plastoQ_OxRdtase_su3"/>
</dbReference>
<dbReference type="InterPro" id="IPR038430">
    <property type="entry name" value="NDAH_ubi_oxred_su3_sf"/>
</dbReference>
<dbReference type="PANTHER" id="PTHR11058">
    <property type="entry name" value="NADH-UBIQUINONE OXIDOREDUCTASE CHAIN 3"/>
    <property type="match status" value="1"/>
</dbReference>
<dbReference type="PANTHER" id="PTHR11058:SF9">
    <property type="entry name" value="NADH-UBIQUINONE OXIDOREDUCTASE CHAIN 3"/>
    <property type="match status" value="1"/>
</dbReference>
<dbReference type="Pfam" id="PF00507">
    <property type="entry name" value="Oxidored_q4"/>
    <property type="match status" value="1"/>
</dbReference>
<evidence type="ECO:0000255" key="1">
    <source>
        <dbReference type="HAMAP-Rule" id="MF_01394"/>
    </source>
</evidence>
<evidence type="ECO:0000305" key="2"/>
<comment type="function">
    <text evidence="1">NDH-1 shuttles electrons from an unknown electron donor, via FMN and iron-sulfur (Fe-S) centers, to quinones in the respiratory and/or the photosynthetic chain. The immediate electron acceptor for the enzyme in this species is believed to be plastoquinone. Couples the redox reaction to proton translocation, and thus conserves the redox energy in a proton gradient. Cyanobacterial NDH-1 also plays a role in inorganic carbon-concentration.</text>
</comment>
<comment type="catalytic activity">
    <reaction evidence="1">
        <text>a plastoquinone + NADH + (n+1) H(+)(in) = a plastoquinol + NAD(+) + n H(+)(out)</text>
        <dbReference type="Rhea" id="RHEA:42608"/>
        <dbReference type="Rhea" id="RHEA-COMP:9561"/>
        <dbReference type="Rhea" id="RHEA-COMP:9562"/>
        <dbReference type="ChEBI" id="CHEBI:15378"/>
        <dbReference type="ChEBI" id="CHEBI:17757"/>
        <dbReference type="ChEBI" id="CHEBI:57540"/>
        <dbReference type="ChEBI" id="CHEBI:57945"/>
        <dbReference type="ChEBI" id="CHEBI:62192"/>
    </reaction>
</comment>
<comment type="catalytic activity">
    <reaction evidence="1">
        <text>a plastoquinone + NADPH + (n+1) H(+)(in) = a plastoquinol + NADP(+) + n H(+)(out)</text>
        <dbReference type="Rhea" id="RHEA:42612"/>
        <dbReference type="Rhea" id="RHEA-COMP:9561"/>
        <dbReference type="Rhea" id="RHEA-COMP:9562"/>
        <dbReference type="ChEBI" id="CHEBI:15378"/>
        <dbReference type="ChEBI" id="CHEBI:17757"/>
        <dbReference type="ChEBI" id="CHEBI:57783"/>
        <dbReference type="ChEBI" id="CHEBI:58349"/>
        <dbReference type="ChEBI" id="CHEBI:62192"/>
    </reaction>
</comment>
<comment type="subunit">
    <text evidence="1">NDH-1 can be composed of about 15 different subunits; different subcomplexes with different compositions have been identified which probably have different functions.</text>
</comment>
<comment type="subcellular location">
    <subcellularLocation>
        <location evidence="1">Cellular thylakoid membrane</location>
        <topology evidence="1">Multi-pass membrane protein</topology>
    </subcellularLocation>
</comment>
<comment type="similarity">
    <text evidence="1">Belongs to the complex I subunit 3 family.</text>
</comment>
<gene>
    <name evidence="1" type="primary">ndhC</name>
    <name type="ordered locus">all3842</name>
</gene>
<sequence length="120" mass="13621">MFVLSGYEYLLGFLIICSLVPALALSASKLLRPTGNSLERRTTYESGMEPIGGAWIQFNIRYYMFALVFVVFDVETVFLYPWAVAFHRLGLLAFIEALIFIAILVVALVYAWRKGALEWS</sequence>
<accession>P0A3S5</accession>
<accession>Q44239</accession>
<accession>Q9WVX6</accession>
<feature type="chain" id="PRO_0000117857" description="NAD(P)H-quinone oxidoreductase subunit 3">
    <location>
        <begin position="1"/>
        <end position="120"/>
    </location>
</feature>
<feature type="transmembrane region" description="Helical" evidence="1">
    <location>
        <begin position="1"/>
        <end position="21"/>
    </location>
</feature>
<feature type="transmembrane region" description="Helical" evidence="1">
    <location>
        <begin position="64"/>
        <end position="84"/>
    </location>
</feature>
<feature type="transmembrane region" description="Helical" evidence="1">
    <location>
        <begin position="89"/>
        <end position="109"/>
    </location>
</feature>
<feature type="sequence conflict" description="In Ref. 3; AAC44352." evidence="2" ref="3">
    <original>H</original>
    <variation>N</variation>
    <location>
        <position position="87"/>
    </location>
</feature>
<keyword id="KW-0472">Membrane</keyword>
<keyword id="KW-0520">NAD</keyword>
<keyword id="KW-0521">NADP</keyword>
<keyword id="KW-0618">Plastoquinone</keyword>
<keyword id="KW-0874">Quinone</keyword>
<keyword id="KW-1185">Reference proteome</keyword>
<keyword id="KW-0793">Thylakoid</keyword>
<keyword id="KW-1278">Translocase</keyword>
<keyword id="KW-0812">Transmembrane</keyword>
<keyword id="KW-1133">Transmembrane helix</keyword>
<keyword id="KW-0813">Transport</keyword>
<organism>
    <name type="scientific">Nostoc sp. (strain PCC 7120 / SAG 25.82 / UTEX 2576)</name>
    <dbReference type="NCBI Taxonomy" id="103690"/>
    <lineage>
        <taxon>Bacteria</taxon>
        <taxon>Bacillati</taxon>
        <taxon>Cyanobacteriota</taxon>
        <taxon>Cyanophyceae</taxon>
        <taxon>Nostocales</taxon>
        <taxon>Nostocaceae</taxon>
        <taxon>Nostoc</taxon>
    </lineage>
</organism>
<name>NU3C_NOSS1</name>
<protein>
    <recommendedName>
        <fullName evidence="1">NAD(P)H-quinone oxidoreductase subunit 3</fullName>
        <ecNumber evidence="1">7.1.1.-</ecNumber>
    </recommendedName>
    <alternativeName>
        <fullName evidence="1">NAD(P)H dehydrogenase subunit 3</fullName>
    </alternativeName>
    <alternativeName>
        <fullName evidence="1">NADH-plastoquinone oxidoreductase subunit 3</fullName>
    </alternativeName>
    <alternativeName>
        <fullName evidence="1">NDH-1 subunit 3</fullName>
        <shortName evidence="1">NDH-C</shortName>
    </alternativeName>
</protein>
<reference key="1">
    <citation type="submission" date="1998-10" db="EMBL/GenBank/DDBJ databases">
        <title>Isolation and characterisation of the ndhCKJ-cluster of the cyanobacteria Anabaena sp. PCC 7120.</title>
        <authorList>
            <person name="Happe T."/>
            <person name="Schiefer W."/>
            <person name="Boehme H."/>
        </authorList>
    </citation>
    <scope>NUCLEOTIDE SEQUENCE [GENOMIC DNA]</scope>
</reference>
<reference key="2">
    <citation type="journal article" date="2001" name="DNA Res.">
        <title>Complete genomic sequence of the filamentous nitrogen-fixing cyanobacterium Anabaena sp. strain PCC 7120.</title>
        <authorList>
            <person name="Kaneko T."/>
            <person name="Nakamura Y."/>
            <person name="Wolk C.P."/>
            <person name="Kuritz T."/>
            <person name="Sasamoto S."/>
            <person name="Watanabe A."/>
            <person name="Iriguchi M."/>
            <person name="Ishikawa A."/>
            <person name="Kawashima K."/>
            <person name="Kimura T."/>
            <person name="Kishida Y."/>
            <person name="Kohara M."/>
            <person name="Matsumoto M."/>
            <person name="Matsuno A."/>
            <person name="Muraki A."/>
            <person name="Nakazaki N."/>
            <person name="Shimpo S."/>
            <person name="Sugimoto M."/>
            <person name="Takazawa M."/>
            <person name="Yamada M."/>
            <person name="Yasuda M."/>
            <person name="Tabata S."/>
        </authorList>
    </citation>
    <scope>NUCLEOTIDE SEQUENCE [LARGE SCALE GENOMIC DNA]</scope>
    <source>
        <strain>PCC 7120 / SAG 25.82 / UTEX 2576</strain>
    </source>
</reference>
<reference key="3">
    <citation type="journal article" date="1996" name="Eur. J. Biochem.">
        <title>Cloning, analysis and inactivation of the ndhK gene encoding a subunit of NADH quinone oxidoreductase from Anabaena PCC 7120.</title>
        <authorList>
            <person name="Howitt C.A."/>
            <person name="Whelan J."/>
            <person name="Price G.D."/>
            <person name="Day D.A."/>
        </authorList>
    </citation>
    <scope>NUCLEOTIDE SEQUENCE [GENOMIC DNA] OF 84-120</scope>
</reference>